<comment type="function">
    <text evidence="1">Probably involved in ribonucleotide reductase function.</text>
</comment>
<comment type="similarity">
    <text evidence="1">Belongs to the NrdI family.</text>
</comment>
<dbReference type="EMBL" id="CP001191">
    <property type="protein sequence ID" value="ACI56766.1"/>
    <property type="molecule type" value="Genomic_DNA"/>
</dbReference>
<dbReference type="RefSeq" id="WP_012559070.1">
    <property type="nucleotide sequence ID" value="NC_011369.1"/>
</dbReference>
<dbReference type="SMR" id="B5ZRN9"/>
<dbReference type="STRING" id="395492.Rleg2_3499"/>
<dbReference type="KEGG" id="rlt:Rleg2_3499"/>
<dbReference type="eggNOG" id="COG1780">
    <property type="taxonomic scope" value="Bacteria"/>
</dbReference>
<dbReference type="HOGENOM" id="CLU_114845_0_0_5"/>
<dbReference type="Proteomes" id="UP000008330">
    <property type="component" value="Chromosome"/>
</dbReference>
<dbReference type="GO" id="GO:0010181">
    <property type="term" value="F:FMN binding"/>
    <property type="evidence" value="ECO:0007669"/>
    <property type="project" value="InterPro"/>
</dbReference>
<dbReference type="GO" id="GO:0036211">
    <property type="term" value="P:protein modification process"/>
    <property type="evidence" value="ECO:0007669"/>
    <property type="project" value="InterPro"/>
</dbReference>
<dbReference type="Gene3D" id="3.40.50.360">
    <property type="match status" value="1"/>
</dbReference>
<dbReference type="HAMAP" id="MF_00128">
    <property type="entry name" value="NrdI"/>
    <property type="match status" value="1"/>
</dbReference>
<dbReference type="InterPro" id="IPR029039">
    <property type="entry name" value="Flavoprotein-like_sf"/>
</dbReference>
<dbReference type="InterPro" id="IPR020852">
    <property type="entry name" value="RNR_Ib_NrdI_bac"/>
</dbReference>
<dbReference type="InterPro" id="IPR004465">
    <property type="entry name" value="RNR_NrdI"/>
</dbReference>
<dbReference type="NCBIfam" id="TIGR00333">
    <property type="entry name" value="nrdI"/>
    <property type="match status" value="1"/>
</dbReference>
<dbReference type="PANTHER" id="PTHR37297">
    <property type="entry name" value="PROTEIN NRDI"/>
    <property type="match status" value="1"/>
</dbReference>
<dbReference type="PANTHER" id="PTHR37297:SF1">
    <property type="entry name" value="PROTEIN NRDI"/>
    <property type="match status" value="1"/>
</dbReference>
<dbReference type="Pfam" id="PF07972">
    <property type="entry name" value="Flavodoxin_NdrI"/>
    <property type="match status" value="1"/>
</dbReference>
<dbReference type="PIRSF" id="PIRSF005087">
    <property type="entry name" value="NrdI"/>
    <property type="match status" value="1"/>
</dbReference>
<dbReference type="SUPFAM" id="SSF52218">
    <property type="entry name" value="Flavoproteins"/>
    <property type="match status" value="1"/>
</dbReference>
<organism>
    <name type="scientific">Rhizobium leguminosarum bv. trifolii (strain WSM2304)</name>
    <dbReference type="NCBI Taxonomy" id="395492"/>
    <lineage>
        <taxon>Bacteria</taxon>
        <taxon>Pseudomonadati</taxon>
        <taxon>Pseudomonadota</taxon>
        <taxon>Alphaproteobacteria</taxon>
        <taxon>Hyphomicrobiales</taxon>
        <taxon>Rhizobiaceae</taxon>
        <taxon>Rhizobium/Agrobacterium group</taxon>
        <taxon>Rhizobium</taxon>
    </lineage>
</organism>
<reference key="1">
    <citation type="journal article" date="2010" name="Stand. Genomic Sci.">
        <title>Complete genome sequence of Rhizobium leguminosarum bv trifolii strain WSM2304, an effective microsymbiont of the South American clover Trifolium polymorphum.</title>
        <authorList>
            <person name="Reeve W."/>
            <person name="O'Hara G."/>
            <person name="Chain P."/>
            <person name="Ardley J."/>
            <person name="Brau L."/>
            <person name="Nandesena K."/>
            <person name="Tiwari R."/>
            <person name="Malfatti S."/>
            <person name="Kiss H."/>
            <person name="Lapidus A."/>
            <person name="Copeland A."/>
            <person name="Nolan M."/>
            <person name="Land M."/>
            <person name="Ivanova N."/>
            <person name="Mavromatis K."/>
            <person name="Markowitz V."/>
            <person name="Kyrpides N."/>
            <person name="Melino V."/>
            <person name="Denton M."/>
            <person name="Yates R."/>
            <person name="Howieson J."/>
        </authorList>
    </citation>
    <scope>NUCLEOTIDE SEQUENCE [LARGE SCALE GENOMIC DNA]</scope>
    <source>
        <strain>WSM2304</strain>
    </source>
</reference>
<feature type="chain" id="PRO_1000095626" description="Protein NrdI">
    <location>
        <begin position="1"/>
        <end position="134"/>
    </location>
</feature>
<keyword id="KW-1185">Reference proteome</keyword>
<protein>
    <recommendedName>
        <fullName evidence="1">Protein NrdI</fullName>
    </recommendedName>
</protein>
<proteinExistence type="inferred from homology"/>
<sequence>MGLIVYYSSRSENTHRFVARLGLRAARIPAGGADAFHIREPFVLVVPTYSDGDGKGAVPKQVIRFLNDAENRGHIRGVIAAGNSNFGETYGLAGDVISQKCRVPYLYRFELIGTEEDVANVKHGMERFWTREQL</sequence>
<name>NRDI_RHILW</name>
<evidence type="ECO:0000255" key="1">
    <source>
        <dbReference type="HAMAP-Rule" id="MF_00128"/>
    </source>
</evidence>
<accession>B5ZRN9</accession>
<gene>
    <name evidence="1" type="primary">nrdI</name>
    <name type="ordered locus">Rleg2_3499</name>
</gene>